<dbReference type="EC" id="2.4.2.7" evidence="1"/>
<dbReference type="EMBL" id="BA000026">
    <property type="protein sequence ID" value="BAC44808.1"/>
    <property type="molecule type" value="Genomic_DNA"/>
</dbReference>
<dbReference type="RefSeq" id="WP_011077836.1">
    <property type="nucleotide sequence ID" value="NC_004432.1"/>
</dbReference>
<dbReference type="SMR" id="Q8EUA8"/>
<dbReference type="FunCoup" id="Q8EUA8">
    <property type="interactions" value="186"/>
</dbReference>
<dbReference type="STRING" id="272633.gene:10732142"/>
<dbReference type="KEGG" id="mpe:MYPE10230"/>
<dbReference type="eggNOG" id="COG0503">
    <property type="taxonomic scope" value="Bacteria"/>
</dbReference>
<dbReference type="HOGENOM" id="CLU_063339_3_0_14"/>
<dbReference type="InParanoid" id="Q8EUA8"/>
<dbReference type="UniPathway" id="UPA00588">
    <property type="reaction ID" value="UER00646"/>
</dbReference>
<dbReference type="Proteomes" id="UP000002522">
    <property type="component" value="Chromosome"/>
</dbReference>
<dbReference type="GO" id="GO:0005737">
    <property type="term" value="C:cytoplasm"/>
    <property type="evidence" value="ECO:0007669"/>
    <property type="project" value="UniProtKB-SubCell"/>
</dbReference>
<dbReference type="GO" id="GO:0002055">
    <property type="term" value="F:adenine binding"/>
    <property type="evidence" value="ECO:0007669"/>
    <property type="project" value="TreeGrafter"/>
</dbReference>
<dbReference type="GO" id="GO:0003999">
    <property type="term" value="F:adenine phosphoribosyltransferase activity"/>
    <property type="evidence" value="ECO:0007669"/>
    <property type="project" value="UniProtKB-UniRule"/>
</dbReference>
<dbReference type="GO" id="GO:0016208">
    <property type="term" value="F:AMP binding"/>
    <property type="evidence" value="ECO:0007669"/>
    <property type="project" value="TreeGrafter"/>
</dbReference>
<dbReference type="GO" id="GO:0006168">
    <property type="term" value="P:adenine salvage"/>
    <property type="evidence" value="ECO:0007669"/>
    <property type="project" value="InterPro"/>
</dbReference>
<dbReference type="GO" id="GO:0044209">
    <property type="term" value="P:AMP salvage"/>
    <property type="evidence" value="ECO:0007669"/>
    <property type="project" value="UniProtKB-UniRule"/>
</dbReference>
<dbReference type="GO" id="GO:0006166">
    <property type="term" value="P:purine ribonucleoside salvage"/>
    <property type="evidence" value="ECO:0007669"/>
    <property type="project" value="UniProtKB-KW"/>
</dbReference>
<dbReference type="CDD" id="cd06223">
    <property type="entry name" value="PRTases_typeI"/>
    <property type="match status" value="1"/>
</dbReference>
<dbReference type="FunFam" id="3.40.50.2020:FF:000021">
    <property type="entry name" value="Adenine phosphoribosyltransferase"/>
    <property type="match status" value="1"/>
</dbReference>
<dbReference type="Gene3D" id="3.40.50.2020">
    <property type="match status" value="1"/>
</dbReference>
<dbReference type="HAMAP" id="MF_00004">
    <property type="entry name" value="Aden_phosphoribosyltr"/>
    <property type="match status" value="1"/>
</dbReference>
<dbReference type="InterPro" id="IPR005764">
    <property type="entry name" value="Ade_phspho_trans"/>
</dbReference>
<dbReference type="InterPro" id="IPR000836">
    <property type="entry name" value="PRibTrfase_dom"/>
</dbReference>
<dbReference type="InterPro" id="IPR029057">
    <property type="entry name" value="PRTase-like"/>
</dbReference>
<dbReference type="InterPro" id="IPR050054">
    <property type="entry name" value="UPRTase/APRTase"/>
</dbReference>
<dbReference type="NCBIfam" id="TIGR01090">
    <property type="entry name" value="apt"/>
    <property type="match status" value="1"/>
</dbReference>
<dbReference type="NCBIfam" id="NF002634">
    <property type="entry name" value="PRK02304.1-3"/>
    <property type="match status" value="1"/>
</dbReference>
<dbReference type="NCBIfam" id="NF002636">
    <property type="entry name" value="PRK02304.1-5"/>
    <property type="match status" value="1"/>
</dbReference>
<dbReference type="PANTHER" id="PTHR32315">
    <property type="entry name" value="ADENINE PHOSPHORIBOSYLTRANSFERASE"/>
    <property type="match status" value="1"/>
</dbReference>
<dbReference type="PANTHER" id="PTHR32315:SF3">
    <property type="entry name" value="ADENINE PHOSPHORIBOSYLTRANSFERASE"/>
    <property type="match status" value="1"/>
</dbReference>
<dbReference type="Pfam" id="PF00156">
    <property type="entry name" value="Pribosyltran"/>
    <property type="match status" value="1"/>
</dbReference>
<dbReference type="SUPFAM" id="SSF53271">
    <property type="entry name" value="PRTase-like"/>
    <property type="match status" value="1"/>
</dbReference>
<dbReference type="PROSITE" id="PS00103">
    <property type="entry name" value="PUR_PYR_PR_TRANSFER"/>
    <property type="match status" value="1"/>
</dbReference>
<proteinExistence type="inferred from homology"/>
<name>APT_MALP2</name>
<organism>
    <name type="scientific">Malacoplasma penetrans (strain HF-2)</name>
    <name type="common">Mycoplasma penetrans</name>
    <dbReference type="NCBI Taxonomy" id="272633"/>
    <lineage>
        <taxon>Bacteria</taxon>
        <taxon>Bacillati</taxon>
        <taxon>Mycoplasmatota</taxon>
        <taxon>Mycoplasmoidales</taxon>
        <taxon>Mycoplasmoidaceae</taxon>
        <taxon>Malacoplasma</taxon>
    </lineage>
</organism>
<protein>
    <recommendedName>
        <fullName evidence="1">Adenine phosphoribosyltransferase</fullName>
        <shortName evidence="1">APRT</shortName>
        <ecNumber evidence="1">2.4.2.7</ecNumber>
    </recommendedName>
</protein>
<feature type="chain" id="PRO_0000149416" description="Adenine phosphoribosyltransferase">
    <location>
        <begin position="1"/>
        <end position="172"/>
    </location>
</feature>
<reference key="1">
    <citation type="journal article" date="2002" name="Nucleic Acids Res.">
        <title>The complete genomic sequence of Mycoplasma penetrans, an intracellular bacterial pathogen in humans.</title>
        <authorList>
            <person name="Sasaki Y."/>
            <person name="Ishikawa J."/>
            <person name="Yamashita A."/>
            <person name="Oshima K."/>
            <person name="Kenri T."/>
            <person name="Furuya K."/>
            <person name="Yoshino C."/>
            <person name="Horino A."/>
            <person name="Shiba T."/>
            <person name="Sasaki T."/>
            <person name="Hattori M."/>
        </authorList>
    </citation>
    <scope>NUCLEOTIDE SEQUENCE [LARGE SCALE GENOMIC DNA]</scope>
    <source>
        <strain>HF-2</strain>
    </source>
</reference>
<accession>Q8EUA8</accession>
<gene>
    <name evidence="1" type="primary">apt</name>
    <name type="ordered locus">MYPE10230</name>
</gene>
<comment type="function">
    <text evidence="1">Catalyzes a salvage reaction resulting in the formation of AMP, that is energically less costly than de novo synthesis.</text>
</comment>
<comment type="catalytic activity">
    <reaction evidence="1">
        <text>AMP + diphosphate = 5-phospho-alpha-D-ribose 1-diphosphate + adenine</text>
        <dbReference type="Rhea" id="RHEA:16609"/>
        <dbReference type="ChEBI" id="CHEBI:16708"/>
        <dbReference type="ChEBI" id="CHEBI:33019"/>
        <dbReference type="ChEBI" id="CHEBI:58017"/>
        <dbReference type="ChEBI" id="CHEBI:456215"/>
        <dbReference type="EC" id="2.4.2.7"/>
    </reaction>
</comment>
<comment type="pathway">
    <text evidence="1">Purine metabolism; AMP biosynthesis via salvage pathway; AMP from adenine: step 1/1.</text>
</comment>
<comment type="subunit">
    <text evidence="1">Homodimer.</text>
</comment>
<comment type="subcellular location">
    <subcellularLocation>
        <location evidence="1">Cytoplasm</location>
    </subcellularLocation>
</comment>
<comment type="similarity">
    <text evidence="1">Belongs to the purine/pyrimidine phosphoribosyltransferase family.</text>
</comment>
<keyword id="KW-0963">Cytoplasm</keyword>
<keyword id="KW-0328">Glycosyltransferase</keyword>
<keyword id="KW-0660">Purine salvage</keyword>
<keyword id="KW-1185">Reference proteome</keyword>
<keyword id="KW-0808">Transferase</keyword>
<sequence>MGYEEIKNTIATIEDFPKKGISFKDITPLLLDHKKMNFIIDELAKFAKTIDFDIIVAPESRGFLFGLPLALNLKKPFVPIRKKGKLPREVISQEYELEYGKATIEVTKNDIPANSKVLIIDDLIATGGTTVAIQDLVTKLGSTVVGQAYLIELVGLCDYEKLQGKFFSMIKY</sequence>
<evidence type="ECO:0000255" key="1">
    <source>
        <dbReference type="HAMAP-Rule" id="MF_00004"/>
    </source>
</evidence>